<feature type="chain" id="PRO_0000451199" description="Cytotoxin-L">
    <location>
        <begin position="1"/>
        <end position="2364"/>
    </location>
</feature>
<feature type="chain" id="PRO_0000451200" description="Glucosyltransferase TcsL" evidence="2">
    <location>
        <begin position="1"/>
        <end position="543"/>
    </location>
</feature>
<feature type="domain" description="GT44" evidence="5">
    <location>
        <begin position="96"/>
        <end position="468"/>
    </location>
</feature>
<feature type="domain" description="Peptidase C80" evidence="7">
    <location>
        <begin position="567"/>
        <end position="774"/>
    </location>
</feature>
<feature type="repeat" description="Cell wall-binding 1" evidence="6">
    <location>
        <begin position="1833"/>
        <end position="1852"/>
    </location>
</feature>
<feature type="repeat" description="Cell wall-binding 2" evidence="6">
    <location>
        <begin position="1854"/>
        <end position="1873"/>
    </location>
</feature>
<feature type="repeat" description="Cell wall-binding 3" evidence="6">
    <location>
        <begin position="1876"/>
        <end position="1895"/>
    </location>
</feature>
<feature type="repeat" description="Cell wall-binding 4" evidence="6">
    <location>
        <begin position="1926"/>
        <end position="1945"/>
    </location>
</feature>
<feature type="repeat" description="Cell wall-binding 5" evidence="6">
    <location>
        <begin position="1946"/>
        <end position="1965"/>
    </location>
</feature>
<feature type="repeat" description="Cell wall-binding 6" evidence="6">
    <location>
        <begin position="1967"/>
        <end position="1986"/>
    </location>
</feature>
<feature type="repeat" description="Cell wall-binding 7" evidence="6">
    <location>
        <begin position="1987"/>
        <end position="2006"/>
    </location>
</feature>
<feature type="repeat" description="Cell wall-binding 8" evidence="6">
    <location>
        <begin position="2007"/>
        <end position="2026"/>
    </location>
</feature>
<feature type="repeat" description="Cell wall-binding 9" evidence="6">
    <location>
        <begin position="2057"/>
        <end position="2076"/>
    </location>
</feature>
<feature type="repeat" description="Cell wall-binding 10" evidence="6">
    <location>
        <begin position="2077"/>
        <end position="2097"/>
    </location>
</feature>
<feature type="repeat" description="Cell wall-binding 11" evidence="6">
    <location>
        <begin position="2099"/>
        <end position="2118"/>
    </location>
</feature>
<feature type="repeat" description="Cell wall-binding 12" evidence="6">
    <location>
        <begin position="2119"/>
        <end position="2138"/>
    </location>
</feature>
<feature type="repeat" description="Cell wall-binding 13" evidence="6">
    <location>
        <begin position="2139"/>
        <end position="2158"/>
    </location>
</feature>
<feature type="repeat" description="Cell wall-binding 14" evidence="6">
    <location>
        <begin position="2209"/>
        <end position="2224"/>
    </location>
</feature>
<feature type="repeat" description="Cell wall-binding 15" evidence="6">
    <location>
        <begin position="2227"/>
        <end position="2249"/>
    </location>
</feature>
<feature type="repeat" description="Cell wall-binding 16" evidence="6">
    <location>
        <begin position="2250"/>
        <end position="2269"/>
    </location>
</feature>
<feature type="repeat" description="Cell wall-binding 17" evidence="6">
    <location>
        <begin position="2270"/>
        <end position="2289"/>
    </location>
</feature>
<feature type="repeat" description="Cell wall-binding 18" evidence="6">
    <location>
        <begin position="2320"/>
        <end position="2339"/>
    </location>
</feature>
<feature type="repeat" description="Cell wall-binding 19" evidence="6">
    <location>
        <begin position="2340"/>
        <end position="2359"/>
    </location>
</feature>
<feature type="region of interest" description="Four-helical bundle" evidence="3">
    <location>
        <begin position="1"/>
        <end position="91"/>
    </location>
</feature>
<feature type="region of interest" description="Glucosyltransferase region" evidence="3">
    <location>
        <begin position="96"/>
        <end position="468"/>
    </location>
</feature>
<feature type="region of interest" description="Autoprocessing region" evidence="3">
    <location>
        <begin position="544"/>
        <end position="799"/>
    </location>
</feature>
<feature type="region of interest" description="Translocation region" evidence="3">
    <location>
        <begin position="800"/>
        <end position="1500"/>
    </location>
</feature>
<feature type="region of interest" description="Interaction with host SEMA6A and SEMA6B" evidence="9">
    <location>
        <begin position="1433"/>
        <end position="1438"/>
    </location>
</feature>
<feature type="region of interest" description="Interaction with host SEMA6A and SEMA6B" evidence="9">
    <location>
        <begin position="1466"/>
        <end position="1471"/>
    </location>
</feature>
<feature type="region of interest" description="Interaction with host SEMA6A and SEMA6B" evidence="9">
    <location>
        <begin position="1484"/>
        <end position="1495"/>
    </location>
</feature>
<feature type="region of interest" description="Interaction with host SEMA6A and SEMA6B" evidence="9">
    <location>
        <begin position="1504"/>
        <end position="1511"/>
    </location>
</feature>
<feature type="region of interest" description="Interaction with host SEMA6A and SEMA6B" evidence="9">
    <location>
        <begin position="1596"/>
        <end position="1601"/>
    </location>
</feature>
<feature type="region of interest" description="Receptor-binding (CROPS) region" evidence="3">
    <location>
        <begin position="1835"/>
        <end position="2364"/>
    </location>
</feature>
<feature type="active site" description="For protease activity" evidence="7">
    <location>
        <position position="653"/>
    </location>
</feature>
<feature type="active site" description="Nucleophile; for protease activity" evidence="7">
    <location>
        <position position="698"/>
    </location>
</feature>
<feature type="binding site" evidence="3">
    <location>
        <begin position="101"/>
        <end position="103"/>
    </location>
    <ligand>
        <name>UDP-alpha-D-glucose</name>
        <dbReference type="ChEBI" id="CHEBI:58885"/>
    </ligand>
</feature>
<feature type="binding site" evidence="3">
    <location>
        <position position="139"/>
    </location>
    <ligand>
        <name>UDP-alpha-D-glucose</name>
        <dbReference type="ChEBI" id="CHEBI:58885"/>
    </ligand>
</feature>
<feature type="binding site" evidence="3">
    <location>
        <begin position="265"/>
        <end position="270"/>
    </location>
    <ligand>
        <name>UDP-alpha-D-glucose</name>
        <dbReference type="ChEBI" id="CHEBI:58885"/>
    </ligand>
</feature>
<feature type="binding site" evidence="3">
    <location>
        <begin position="286"/>
        <end position="288"/>
    </location>
    <ligand>
        <name>UDP-alpha-D-glucose</name>
        <dbReference type="ChEBI" id="CHEBI:58885"/>
    </ligand>
</feature>
<feature type="binding site" evidence="3">
    <location>
        <position position="288"/>
    </location>
    <ligand>
        <name>Mg(2+)</name>
        <dbReference type="ChEBI" id="CHEBI:18420"/>
    </ligand>
</feature>
<feature type="binding site" evidence="3">
    <location>
        <position position="515"/>
    </location>
    <ligand>
        <name>Mg(2+)</name>
        <dbReference type="ChEBI" id="CHEBI:18420"/>
    </ligand>
</feature>
<feature type="binding site" evidence="3">
    <location>
        <begin position="518"/>
        <end position="520"/>
    </location>
    <ligand>
        <name>UDP-alpha-D-glucose</name>
        <dbReference type="ChEBI" id="CHEBI:58885"/>
    </ligand>
</feature>
<feature type="binding site" evidence="3">
    <location>
        <position position="518"/>
    </location>
    <ligand>
        <name>Mg(2+)</name>
        <dbReference type="ChEBI" id="CHEBI:18420"/>
    </ligand>
</feature>
<feature type="binding site" evidence="1">
    <location>
        <position position="545"/>
    </location>
    <ligand>
        <name>Zn(2+)</name>
        <dbReference type="ChEBI" id="CHEBI:29105"/>
    </ligand>
</feature>
<feature type="binding site" evidence="2">
    <location>
        <position position="546"/>
    </location>
    <ligand>
        <name>Zn(2+)</name>
        <dbReference type="ChEBI" id="CHEBI:29105"/>
    </ligand>
</feature>
<feature type="binding site" evidence="1">
    <location>
        <position position="577"/>
    </location>
    <ligand>
        <name>1D-myo-inositol hexakisphosphate</name>
        <dbReference type="ChEBI" id="CHEBI:58130"/>
    </ligand>
</feature>
<feature type="binding site" evidence="1">
    <location>
        <position position="600"/>
    </location>
    <ligand>
        <name>1D-myo-inositol hexakisphosphate</name>
        <dbReference type="ChEBI" id="CHEBI:58130"/>
    </ligand>
</feature>
<feature type="binding site" evidence="1">
    <location>
        <position position="647"/>
    </location>
    <ligand>
        <name>1D-myo-inositol hexakisphosphate</name>
        <dbReference type="ChEBI" id="CHEBI:58130"/>
    </ligand>
</feature>
<feature type="binding site" evidence="2">
    <location>
        <position position="653"/>
    </location>
    <ligand>
        <name>Zn(2+)</name>
        <dbReference type="ChEBI" id="CHEBI:29105"/>
    </ligand>
</feature>
<feature type="binding site" evidence="2">
    <location>
        <position position="757"/>
    </location>
    <ligand>
        <name>Zn(2+)</name>
        <dbReference type="ChEBI" id="CHEBI:29105"/>
    </ligand>
</feature>
<feature type="binding site" evidence="1">
    <location>
        <position position="764"/>
    </location>
    <ligand>
        <name>1D-myo-inositol hexakisphosphate</name>
        <dbReference type="ChEBI" id="CHEBI:58130"/>
    </ligand>
</feature>
<feature type="binding site" evidence="1">
    <location>
        <position position="775"/>
    </location>
    <ligand>
        <name>1D-myo-inositol hexakisphosphate</name>
        <dbReference type="ChEBI" id="CHEBI:58130"/>
    </ligand>
</feature>
<feature type="binding site" evidence="1">
    <location>
        <position position="792"/>
    </location>
    <ligand>
        <name>1D-myo-inositol hexakisphosphate</name>
        <dbReference type="ChEBI" id="CHEBI:58130"/>
    </ligand>
</feature>
<feature type="site" description="Cleavage; by autolysis" evidence="2">
    <location>
        <begin position="543"/>
        <end position="544"/>
    </location>
</feature>
<feature type="mutagenesis site" description="Recognizes and binds frizzled receptors instead of SEMA6A and SEMA6B; when associated with 1486-S--V-1497, 1505-S--Y-1509 and 1598-F--Q-1600." evidence="9">
    <original>CIKLIE</original>
    <variation>ELKLML</variation>
    <location>
        <begin position="1433"/>
        <end position="1438"/>
    </location>
</feature>
<feature type="mutagenesis site" description="Recognizes and binds frizzled receptors instead of SEMA6A and SEMA6B; when associated with 1433-E--L-1438, 1505-S--Y-1509 and 1598-F--Q-1600." evidence="9">
    <original>AEFSNESIIRNI</original>
    <variation>SELSDVSLISNV</variation>
    <location>
        <begin position="1486"/>
        <end position="1497"/>
    </location>
</feature>
<feature type="mutagenesis site" description="Recognizes and binds frizzled receptors instead of SEMA6A and SEMA6B; when associated with 1433-E--L-1438, 1486-S--V-1497 and 1598-F--Q-1600." evidence="9">
    <original>LFIYS</original>
    <variation>SFIYY</variation>
    <location>
        <begin position="1505"/>
        <end position="1509"/>
    </location>
</feature>
<feature type="mutagenesis site" description="Recognizes and binds frizzled receptors instead of SEMA6A and SEMA6B; when associated with 1433-E--L-1438, 1486-S--V-1497 and 1505-S--Y-1509." evidence="9">
    <original>NLD</original>
    <variation>FLQ</variation>
    <location>
        <begin position="1598"/>
        <end position="1600"/>
    </location>
</feature>
<name>TCSL2_PARSO</name>
<organism>
    <name type="scientific">Paraclostridium sordellii</name>
    <name type="common">Clostridium sordellii</name>
    <dbReference type="NCBI Taxonomy" id="1505"/>
    <lineage>
        <taxon>Bacteria</taxon>
        <taxon>Bacillati</taxon>
        <taxon>Bacillota</taxon>
        <taxon>Clostridia</taxon>
        <taxon>Peptostreptococcales</taxon>
        <taxon>Peptostreptococcaceae</taxon>
        <taxon>Paraclostridium</taxon>
    </lineage>
</organism>
<protein>
    <recommendedName>
        <fullName evidence="11">Cytotoxin-L</fullName>
        <ecNumber evidence="3">3.4.22.-</ecNumber>
    </recommendedName>
    <alternativeName>
        <fullName evidence="12">Lethal toxin</fullName>
        <shortName evidence="12">LT</shortName>
    </alternativeName>
    <component>
        <recommendedName>
            <fullName evidence="13">Glucosyltransferase TcsL</fullName>
            <ecNumber evidence="8 10">2.4.1.-</ecNumber>
        </recommendedName>
    </component>
</protein>
<reference key="1">
    <citation type="journal article" date="2014" name="Cell. Microbiol.">
        <title>Haemorrhagic toxin and lethal toxin from Clostridium sordellii strain vpi9048: molecular characterization and comparative analysis of substrate specificity of the large clostridial glucosylating toxins.</title>
        <authorList>
            <person name="Genth H."/>
            <person name="Pauillac S."/>
            <person name="Schelle I."/>
            <person name="Bouvet P."/>
            <person name="Bouchier C."/>
            <person name="Varela-Chavez C."/>
            <person name="Just I."/>
            <person name="Popoff M.R."/>
        </authorList>
    </citation>
    <scope>NUCLEOTIDE SEQUENCE [GENOMIC DNA]</scope>
    <scope>FUNCTION (GLUCOSYLTRANSFERASE TCSL)</scope>
    <scope>CATALYTIC ACTIVITY (GLUCOSYLTRANSFERASE TCSL)</scope>
    <source>
        <strain evidence="14">VPI 9048</strain>
    </source>
</reference>
<reference key="2">
    <citation type="journal article" date="1996" name="Biochem. Biophys. Res. Commun.">
        <title>The ras-related protein Ral is monoglucosylated by Clostridium sordellii lethal toxin.</title>
        <authorList>
            <person name="Hofmann F."/>
            <person name="Rex G."/>
            <person name="Aktories K."/>
            <person name="Just I."/>
        </authorList>
    </citation>
    <scope>FUNCTION (GLUCOSYLTRANSFERASE TCSL)</scope>
    <scope>CATALYTIC ACTIVITY (GLUCOSYLTRANSFERASE TCSL)</scope>
    <source>
        <strain>VPI 9048</strain>
    </source>
</reference>
<reference evidence="15" key="3">
    <citation type="journal article" date="2020" name="Cell">
        <title>Recognition of semaphorin proteins by P. sordellii lethal toxin reveals principles of receptor specificity in clostridial toxins.</title>
        <authorList>
            <person name="Lee H."/>
            <person name="Beilhartz G.L."/>
            <person name="Kucharska I."/>
            <person name="Raman S."/>
            <person name="Cui H."/>
            <person name="Lam M.H.Y."/>
            <person name="Liang H."/>
            <person name="Rubinstein J.L."/>
            <person name="Schramek D."/>
            <person name="Julien J.P."/>
            <person name="Melnyk R.A."/>
            <person name="Taipale M."/>
        </authorList>
    </citation>
    <scope>STRUCTURE BY ELECTRON MICROSCOPY (3.3 ANGSTROMS) OF 1285-1804 IN COMPLEX WITH SEMA6A</scope>
    <scope>INTERACTION WITH HOST SEMA6A AND SEMA6B (CYTOTOXIN-L)</scope>
    <scope>MUTAGENESIS OF 1433-CYS--GLU-1438; 1486-ALA--ILE-1497; 1505-LEU--SER-1509 AND 1598-ASN--ASP-1600</scope>
</reference>
<gene>
    <name evidence="11" type="primary">tcsL</name>
</gene>
<sequence length="2364" mass="270302">MSLVNKAQLQKMAYVKFRIQEDEYVAILNALEEYHNMSESSVVEKYLKLKDINNLTDNYLNTYKKSGRNKALKKFKEYLTMEVLELKNNSLTPVEKNLHFIWIGGQINDTAINYINQWKDVNSDYTVKVFYDSNAFLINTLKKTIVESATNNTLESFRENLNDPEFDYNKFYRKRMEIIYDKQKHFIDYYKSQIEENPEFIIDNIIKTYLSNEYSKDLEALNKYIEESLNKITANNGNDIRNLEKFADEDLVRLYNQELVERWNLAAASDILRISMLKEDGGVYLDVDMLPGIQPDLFKSINKPDSITDTSWEMIKLEAIMKYKEYIPGYTSKNFDMLDEEVQSSFESALSSTSDKSEIFLPLDDIKVSPLEVKIAFANNSVINQALISLKDSYGSDLVISQIKNRYKILNDNLNPAINEGNDFNTTMKTFNDNLVSISNEDNIMFMIKIADYLKVGFAPDVRSTINLSGPGVYTGAYQDLLMFKDNSINIHLLEPELRNFEFPKTKISQLTEQEITSLWSFNQARAKSQFEEYKKGYFEGALGEDDILDFSQNTVLDKDYVVEKISSSMRTPNKEYVHYIVQLQGDNVSYEAACNLFAKNPYYNILFQKNIENSETAYYYNLIYNKLQEIDKYRIPNLISNRHKIKLTFIGHGKSEFNTDTFANLDVNSLSSEIETILNLAKEDISPKSIEINLLGCNMFSYNVNVEETYPGKLLLKIKDIVSKLMPSISQDSITVSANQYEVRINKEGRRELLDHSGKWINKEESIIKDISSKEYISFNPKENKIIVKSKNLHELSTLLQEIKNNSNSSDIDLEKKVMLTECEINVASNIDTQIVEERIEEAKNLTSDSINYIKNEFKLIESISDALYDLKHQNGLDDSHFISFEDISKTENGFRIRFINKETGNSIFIETEKEIFSEYAAHISKEISNIKDTIFDNVNGKLVKKVNLDAAHEVNTLNSAFFIQSLIEYNTTKESLSNLSVAMKVQVYAQLFSTGLNTITDASKVVELVSTALDETIDLLPTLSEGLPIIATIIDGVSLGAAIKELSETNDPLLRQEIEAKIGIMAVNLTAASTAIVTSALGIASGFSILLVPLAGISAGIPSLVNNELILQDKATKVIDYFKHISLAETEGAFTLLDDKIIMPQDDLVLSEIDFNNNSITLGKCEIWRTEGGSGHTFTDDIDHFFSSPSITYRKPWLSIYDVLNIKKEKIDFSKDLMVLPNAPNRVFSYEMGWTPGFRSLDNDGTKLLDRIRDHYEGQFYWRYFAFIADALITKLKPRYEDTNVRINLDGNTRSFIVPVITTEQIRKNLSYSFYGSGGSYSLSLSPYNMNIDLNLVENDTWVIDVDNVVKNITIESDEIQKGELIENILSKLNIEDNKIVLNNHTINFYGAINESNRFISLTFSILEDINIIIEIDLVSKSYKILLSGNCIKLIENSSDIQQKIDHIGFNGEHQKYIPYSYIDNETKYNGFIDYSKKEGLFTAEFSNESIIRNIYMPDSNNLFIYSSKDLKDIRIINKGDVKLLIGNYFKDNMKVSLSFTIEDTNTIKLNGVYLDENGVAQILKFMNNAKSALNTSNSLMNFLESINIKNIFYNNLDPNIKFILDTNFIISGSNSIGQFELICDKDKNIQPYFIKFKIKETSYTLYAGNRQNLIVEPSYHLDDSGNISSTVINFSQKYLYGIDRYVNKVIITPNLYTDEINITPVYKPNYICPEVIILDANYINEKINININDLSIRYVWDNDGSDLILIANSEEDNQPQVKIRFVNVFKSDTAADKLSFNFSDKQDVSVSKIISTFSLAAYSDGVFDYEFGLVSLDNECFYINSFGNMVSGLIYINDSLYYFKPPKNNLITGFTTIDDNKYYFDPTKSGAASIGEITIDGKDYYFNKQGILQVGVINTSDGLKYFAPAGTLDENLEGESVNFIGKLNIDGKIYYFEDNYRAAVEWKSLDGETYYFNPKTGEALKGLHQIGDNKYYFDNNGIMQTGFITINDKVFYFNNDGVMQVGYIEVNGKYFYFGKNGERQLGVFNTPDGFKFFGPKDDDLGTEEGELTLYNGILNFNGKIYFFDISNTAVVGWGILDDGSTYYFDDNTAEACIGLTVINDCKYYFDDNGIRQLGFITINDNIFYFSESGKIELGYQNINGNYFYIDESGLVLIGVFDTPDGYKYFAPLNTVNDNIYGQAVEYSGLVRLNEDVYYFGETYKIETGWIENETDKYYFDPETKKAYKGINVVDDIKYYFDENGIMKTGLISFENNNYYFNEDGKMQFGYLNIKDKMFYFGKDGKMQIGVFNTPDGFKYFAHQNTLDENFEGESINYTGWLDLDGKRYYFTDEYIAATSSLTIDGYNYYFDPDTAELVVSE</sequence>
<comment type="function">
    <molecule>Cytotoxin-L</molecule>
    <text evidence="2 3 9">Precursor of a cytotoxin that targets the vascular endothelium, inducing an anti-inflammatory effect and resulting in lethal toxic shock syndrome (By similarity). TcsL constitutes the main toxin that mediates the pathology of P.sordellii infection, an anaerobic Gram-positive bacterium found in soil and in the gastrointestinal and vaginal tracts of animals and humans; although the majority of carriers are asymptomatic, pathogenic P.sordellii infections arise rapidly and are highly lethal (By similarity). This form constitutes the precursor of the toxin: it enters into host cells and mediates autoprocessing to release the active toxin (Glucosyltransferase TcsL) into the host cytosol (By similarity). Targets vascular endothelium by binding to the semaphorin proteins SEMA6A and SEMA6B, and enters host cells via clathrin-mediated endocytosis (PubMed:32589945). Once entered into host cells, acidification in the endosome promotes the membrane insertion of the translocation region and formation of a pore, leading to translocation of the GT44 and peptidase C80 domains across the endosomal membrane (By similarity). This activates the peptidase C80 domain and autocatalytic processing, releasing the N-terminal part (Glucosyltransferase TcsL), which constitutes the active part of the toxin, in the cytosol (By similarity).</text>
</comment>
<comment type="function">
    <molecule>Glucosyltransferase TcsL</molecule>
    <text evidence="3 8 10">Active form of the toxin, which is released into the host cytosol following autoprocessing and inactivates small GTPases (PubMed:24905543, PubMed:8858106). Acts by mediating monoglucosylation of small GTPases of the Ras (H-Ras/HRAS, K-Ras/KRAS and N-Ras/NRAS) family in host cells at the conserved threonine residue located in the switch I region ('Thr-37/35'), using UDP-alpha-D-glucose as the sugar donor (PubMed:24905543, PubMed:8858106). Does not catalyze monoglucosylation of Ral/RALA (PubMed:8858106). Also able to catalyze monoglucosylation of some members of the Rho family (Rac1 and Rap2A), but with less efficiency than with Ras proteins (PubMed:24905543). Monoglucosylation of host small GTPases completely prevents the recognition of the downstream effector, blocking the GTPases in their inactive form and leading to apoptosis (By similarity). Induces an anti-inflammatory effect, mainly by inactivating Ras proteins which results in blockage of the cell cycle and killing of immune cells (By similarity). The absence or moderate local inflammatory response allows C.sordellii spreading in deep tissues, production of toxin which is released in the general circulation and causes a toxic shock syndrome (By similarity).</text>
</comment>
<comment type="catalytic activity">
    <molecule>Glucosyltransferase TcsL</molecule>
    <reaction evidence="8 10">
        <text>L-threonyl-[protein] + UDP-alpha-D-glucose = 3-O-(alpha-D-glucosyl)-L-threonyl-[protein] + UDP + H(+)</text>
        <dbReference type="Rhea" id="RHEA:64684"/>
        <dbReference type="Rhea" id="RHEA-COMP:11060"/>
        <dbReference type="Rhea" id="RHEA-COMP:16656"/>
        <dbReference type="ChEBI" id="CHEBI:15378"/>
        <dbReference type="ChEBI" id="CHEBI:30013"/>
        <dbReference type="ChEBI" id="CHEBI:58223"/>
        <dbReference type="ChEBI" id="CHEBI:58885"/>
        <dbReference type="ChEBI" id="CHEBI:156085"/>
    </reaction>
    <physiologicalReaction direction="left-to-right" evidence="8 10">
        <dbReference type="Rhea" id="RHEA:64685"/>
    </physiologicalReaction>
</comment>
<comment type="cofactor">
    <molecule>Cytotoxin-L</molecule>
    <cofactor evidence="2">
        <name>Zn(2+)</name>
        <dbReference type="ChEBI" id="CHEBI:29105"/>
    </cofactor>
    <text evidence="2">Binds 1 Zn(2+) ion per subunit. Zn(2+) is required for autocatalytic cleavage.</text>
</comment>
<comment type="cofactor">
    <molecule>Glucosyltransferase TcsL</molecule>
    <cofactor evidence="3">
        <name>Mn(2+)</name>
        <dbReference type="ChEBI" id="CHEBI:29035"/>
    </cofactor>
    <cofactor evidence="3">
        <name>Mg(2+)</name>
        <dbReference type="ChEBI" id="CHEBI:18420"/>
    </cofactor>
    <text evidence="3">Has higher activity with Mn(2+), but most likely uses Mg(2+) in host cells. Mn(2+) or Mg(2+) are required for glucosyltransferase activity.</text>
</comment>
<comment type="activity regulation">
    <molecule>Cytotoxin-L</molecule>
    <text evidence="3">Protease activity is activated upon binding to 1D-myo-inositol hexakisphosphate (InsP6), which induces conformational reorganization.</text>
</comment>
<comment type="subunit">
    <molecule>Cytotoxin-L</molecule>
    <text evidence="4 9">Homomultimer; forms an inactive homomultimer at pH 8, which dissociates at pH 4, leading to cytotoxicity (By similarity). Interacts with host SEMA6A; interaction promotes toxin entry into host cell (PubMed:32589945). Interacts with host SEMA6B; interaction promotes toxin entry into host cell (PubMed:32589945).</text>
</comment>
<comment type="subcellular location">
    <molecule>Cytotoxin-L</molecule>
    <subcellularLocation>
        <location evidence="2">Secreted</location>
    </subcellularLocation>
    <subcellularLocation>
        <location evidence="2">Host endosome membrane</location>
    </subcellularLocation>
    <text evidence="2 3">Secreted from P.sordellii cell into the extracellular environment via help of holin-like protein TcdE/UtxA. Binds to the cell surface receptors via the receptor-binding region and enters the cells via clathrin-mediated endocytosis. Acidification in the endosome triggers conformational changes that promote the membrane insertion of the translocation region, allowing formation of a pore, leading to translocation of the GT44 and peptidase C80 domains across the endosomal membrane (By similarity). 1D-myo-inositol hexakisphosphate-binding (InsP6) activates the peptidase C80 domain and autoprocessing, generating the Glucosyltransferase TcsL form, which is released in the host cytosol (By similarity).</text>
</comment>
<comment type="subcellular location">
    <molecule>Glucosyltransferase TcsL</molecule>
    <subcellularLocation>
        <location evidence="3">Host cytoplasm</location>
        <location evidence="3">Host cytosol</location>
    </subcellularLocation>
    <subcellularLocation>
        <location evidence="3">Host cell membrane</location>
        <topology evidence="3">Peripheral membrane protein</topology>
        <orientation evidence="3">Cytoplasmic side</orientation>
    </subcellularLocation>
    <text evidence="3">Binding to phospholipids, such as phosphatidylserine and phosphatidic acid promotes localization to the inner face of the cell membrane close to its membrane anchored substrates (small GTPases).</text>
</comment>
<comment type="domain">
    <molecule>Glucosyltransferase TcsL</molecule>
    <text evidence="3">Consists of 4 functional domains: (1) the N-terminal GT44 domain (glucosyltransferase, also named GTD), which mediates glucosylation of host small GTPases, (2) an autoprocessing region that catalyzes autoprocessing to release the N-terminal GT44 domain in the host cytosol, (3) the translocation region that forms a pore to promote translocation of the GT44 and peptidase C80 domains across the endosomal membrane and (4) the receptor-binding (CROPS) region that mediates binding to host cells and contribute to entry into cells.</text>
</comment>
<comment type="domain">
    <molecule>Cytotoxin-L</molecule>
    <text evidence="2">The receptor-binding (CROPS) region is dynamic and can have open and closed conformations depending of the pH: has an open conformation at endosomal pH and a closed conformation at neutral pH.</text>
</comment>
<comment type="domain">
    <molecule>Cytotoxin-L</molecule>
    <text evidence="1">The cell wall-binding repeats bind carbohydrates, probably contributing to entry into cells.</text>
</comment>
<comment type="domain">
    <molecule>Glucosyltransferase TcsL</molecule>
    <text evidence="3">The four-helical bundle region mediates binding to phospholipids, such as phosphatidylserine and phosphatidic acid. This promotes localization to the inner face of the cell membrane close to small GTPases.</text>
</comment>
<comment type="PTM">
    <molecule>Cytotoxin-L</molecule>
    <text evidence="3">Undergoes autocatalytic cleavage to release the N-terminal part (Glucosyltransferase TcsL), which constitutes the active part of the toxin, in the host cytosol. 1D-myo-inositol hexakisphosphate-binding (InsP6) activates the peptidase C80 domain and promotes autoprocessing.</text>
</comment>
<comment type="similarity">
    <text evidence="13">Belongs to the clostridial glucosylating toxin (LCGT) family.</text>
</comment>
<accession>P0DUB4</accession>
<keyword id="KW-0002">3D-structure</keyword>
<keyword id="KW-0068">Autocatalytic cleavage</keyword>
<keyword id="KW-0328">Glycosyltransferase</keyword>
<keyword id="KW-1032">Host cell membrane</keyword>
<keyword id="KW-1035">Host cytoplasm</keyword>
<keyword id="KW-1039">Host endosome</keyword>
<keyword id="KW-1043">Host membrane</keyword>
<keyword id="KW-0378">Hydrolase</keyword>
<keyword id="KW-0446">Lipid-binding</keyword>
<keyword id="KW-0460">Magnesium</keyword>
<keyword id="KW-0464">Manganese</keyword>
<keyword id="KW-0472">Membrane</keyword>
<keyword id="KW-0479">Metal-binding</keyword>
<keyword id="KW-0645">Protease</keyword>
<keyword id="KW-0677">Repeat</keyword>
<keyword id="KW-0964">Secreted</keyword>
<keyword id="KW-0788">Thiol protease</keyword>
<keyword id="KW-0800">Toxin</keyword>
<keyword id="KW-0808">Transferase</keyword>
<keyword id="KW-0843">Virulence</keyword>
<keyword id="KW-0862">Zinc</keyword>
<evidence type="ECO:0000250" key="1">
    <source>
        <dbReference type="UniProtKB" id="P16154"/>
    </source>
</evidence>
<evidence type="ECO:0000250" key="2">
    <source>
        <dbReference type="UniProtKB" id="P18177"/>
    </source>
</evidence>
<evidence type="ECO:0000250" key="3">
    <source>
        <dbReference type="UniProtKB" id="Q46342"/>
    </source>
</evidence>
<evidence type="ECO:0000250" key="4">
    <source>
        <dbReference type="UniProtKB" id="T0D3N5"/>
    </source>
</evidence>
<evidence type="ECO:0000255" key="5"/>
<evidence type="ECO:0000255" key="6">
    <source>
        <dbReference type="PROSITE-ProRule" id="PRU00591"/>
    </source>
</evidence>
<evidence type="ECO:0000255" key="7">
    <source>
        <dbReference type="PROSITE-ProRule" id="PRU01107"/>
    </source>
</evidence>
<evidence type="ECO:0000269" key="8">
    <source>
    </source>
</evidence>
<evidence type="ECO:0000269" key="9">
    <source>
    </source>
</evidence>
<evidence type="ECO:0000269" key="10">
    <source>
    </source>
</evidence>
<evidence type="ECO:0000303" key="11">
    <source>
    </source>
</evidence>
<evidence type="ECO:0000303" key="12">
    <source>
    </source>
</evidence>
<evidence type="ECO:0000305" key="13"/>
<evidence type="ECO:0000312" key="14">
    <source>
        <dbReference type="EMBL" id="AHB59887.1"/>
    </source>
</evidence>
<evidence type="ECO:0007744" key="15">
    <source>
        <dbReference type="PDB" id="6WTS"/>
    </source>
</evidence>
<proteinExistence type="evidence at protein level"/>
<dbReference type="EC" id="3.4.22.-" evidence="3"/>
<dbReference type="EC" id="2.4.1.-" evidence="8 10"/>
<dbReference type="EMBL" id="KF726110">
    <property type="protein sequence ID" value="AHB59887.1"/>
    <property type="molecule type" value="Genomic_DNA"/>
</dbReference>
<dbReference type="RefSeq" id="WP_021127579.1">
    <property type="nucleotide sequence ID" value="NZ_MG205642.1"/>
</dbReference>
<dbReference type="PDB" id="6WTS">
    <property type="method" value="EM"/>
    <property type="resolution" value="3.30 A"/>
    <property type="chains" value="C=1285-1804"/>
</dbReference>
<dbReference type="PDBsum" id="6WTS"/>
<dbReference type="SMR" id="P0DUB4"/>
<dbReference type="GO" id="GO:0005576">
    <property type="term" value="C:extracellular region"/>
    <property type="evidence" value="ECO:0007669"/>
    <property type="project" value="UniProtKB-SubCell"/>
</dbReference>
<dbReference type="GO" id="GO:0044164">
    <property type="term" value="C:host cell cytosol"/>
    <property type="evidence" value="ECO:0007669"/>
    <property type="project" value="UniProtKB-SubCell"/>
</dbReference>
<dbReference type="GO" id="GO:0044175">
    <property type="term" value="C:host cell endosome membrane"/>
    <property type="evidence" value="ECO:0007669"/>
    <property type="project" value="UniProtKB-SubCell"/>
</dbReference>
<dbReference type="GO" id="GO:0020002">
    <property type="term" value="C:host cell plasma membrane"/>
    <property type="evidence" value="ECO:0007669"/>
    <property type="project" value="UniProtKB-SubCell"/>
</dbReference>
<dbReference type="GO" id="GO:0016020">
    <property type="term" value="C:membrane"/>
    <property type="evidence" value="ECO:0007669"/>
    <property type="project" value="UniProtKB-KW"/>
</dbReference>
<dbReference type="GO" id="GO:0008234">
    <property type="term" value="F:cysteine-type peptidase activity"/>
    <property type="evidence" value="ECO:0007669"/>
    <property type="project" value="UniProtKB-KW"/>
</dbReference>
<dbReference type="GO" id="GO:0016757">
    <property type="term" value="F:glycosyltransferase activity"/>
    <property type="evidence" value="ECO:0007669"/>
    <property type="project" value="UniProtKB-KW"/>
</dbReference>
<dbReference type="GO" id="GO:0008289">
    <property type="term" value="F:lipid binding"/>
    <property type="evidence" value="ECO:0007669"/>
    <property type="project" value="UniProtKB-KW"/>
</dbReference>
<dbReference type="GO" id="GO:0046872">
    <property type="term" value="F:metal ion binding"/>
    <property type="evidence" value="ECO:0007669"/>
    <property type="project" value="UniProtKB-KW"/>
</dbReference>
<dbReference type="GO" id="GO:0090729">
    <property type="term" value="F:toxin activity"/>
    <property type="evidence" value="ECO:0007669"/>
    <property type="project" value="UniProtKB-KW"/>
</dbReference>
<dbReference type="GO" id="GO:0006508">
    <property type="term" value="P:proteolysis"/>
    <property type="evidence" value="ECO:0007669"/>
    <property type="project" value="UniProtKB-KW"/>
</dbReference>
<dbReference type="CDD" id="cd20502">
    <property type="entry name" value="C80_toxinA_B-like"/>
    <property type="match status" value="1"/>
</dbReference>
<dbReference type="CDD" id="cd16840">
    <property type="entry name" value="toxin_MLD"/>
    <property type="match status" value="1"/>
</dbReference>
<dbReference type="Gene3D" id="1.10.10.1780">
    <property type="match status" value="1"/>
</dbReference>
<dbReference type="Gene3D" id="1.10.274.80">
    <property type="match status" value="1"/>
</dbReference>
<dbReference type="Gene3D" id="1.10.3730.30">
    <property type="match status" value="1"/>
</dbReference>
<dbReference type="Gene3D" id="1.20.58.1190">
    <property type="match status" value="1"/>
</dbReference>
<dbReference type="Gene3D" id="3.40.50.11050">
    <property type="match status" value="1"/>
</dbReference>
<dbReference type="Gene3D" id="2.10.270.10">
    <property type="entry name" value="Cholin Binding"/>
    <property type="match status" value="6"/>
</dbReference>
<dbReference type="InterPro" id="IPR018337">
    <property type="entry name" value="Cell_wall/Cho-bd_repeat"/>
</dbReference>
<dbReference type="InterPro" id="IPR020974">
    <property type="entry name" value="CPD_dom"/>
</dbReference>
<dbReference type="InterPro" id="IPR038383">
    <property type="entry name" value="CPD_dom_sf"/>
</dbReference>
<dbReference type="InterPro" id="IPR020972">
    <property type="entry name" value="Dermonecrotic/RTX_toxin_MLD"/>
</dbReference>
<dbReference type="InterPro" id="IPR029044">
    <property type="entry name" value="Nucleotide-diphossugar_trans"/>
</dbReference>
<dbReference type="InterPro" id="IPR024770">
    <property type="entry name" value="TcdA/TcdB_cat"/>
</dbReference>
<dbReference type="InterPro" id="IPR024772">
    <property type="entry name" value="TcdA/TcdB_N"/>
</dbReference>
<dbReference type="InterPro" id="IPR024769">
    <property type="entry name" value="TcdA/TcdB_pore_forming"/>
</dbReference>
<dbReference type="Pfam" id="PF01473">
    <property type="entry name" value="Choline_bind_1"/>
    <property type="match status" value="7"/>
</dbReference>
<dbReference type="Pfam" id="PF11647">
    <property type="entry name" value="MLD"/>
    <property type="match status" value="1"/>
</dbReference>
<dbReference type="Pfam" id="PF11713">
    <property type="entry name" value="Peptidase_C80"/>
    <property type="match status" value="1"/>
</dbReference>
<dbReference type="Pfam" id="PF12919">
    <property type="entry name" value="TcdA_TcdB"/>
    <property type="match status" value="1"/>
</dbReference>
<dbReference type="Pfam" id="PF12920">
    <property type="entry name" value="TcdA_TcdB_pore"/>
    <property type="match status" value="1"/>
</dbReference>
<dbReference type="Pfam" id="PF12918">
    <property type="entry name" value="TcdB_N"/>
    <property type="match status" value="1"/>
</dbReference>
<dbReference type="SUPFAM" id="SSF69360">
    <property type="entry name" value="Cell wall binding repeat"/>
    <property type="match status" value="4"/>
</dbReference>
<dbReference type="SUPFAM" id="SSF53448">
    <property type="entry name" value="Nucleotide-diphospho-sugar transferases"/>
    <property type="match status" value="1"/>
</dbReference>
<dbReference type="PROSITE" id="PS51771">
    <property type="entry name" value="CGT_MARTX_CPD"/>
    <property type="match status" value="1"/>
</dbReference>
<dbReference type="PROSITE" id="PS51170">
    <property type="entry name" value="CW"/>
    <property type="match status" value="19"/>
</dbReference>